<name>KDSB_CHLL2</name>
<dbReference type="EC" id="2.7.7.38" evidence="1"/>
<dbReference type="EMBL" id="CP001097">
    <property type="protein sequence ID" value="ACD91067.1"/>
    <property type="molecule type" value="Genomic_DNA"/>
</dbReference>
<dbReference type="RefSeq" id="WP_012466936.1">
    <property type="nucleotide sequence ID" value="NC_010803.1"/>
</dbReference>
<dbReference type="SMR" id="B3EG58"/>
<dbReference type="STRING" id="290315.Clim_2038"/>
<dbReference type="KEGG" id="cli:Clim_2038"/>
<dbReference type="eggNOG" id="COG1212">
    <property type="taxonomic scope" value="Bacteria"/>
</dbReference>
<dbReference type="HOGENOM" id="CLU_065038_0_1_10"/>
<dbReference type="OrthoDB" id="9815559at2"/>
<dbReference type="UniPathway" id="UPA00030"/>
<dbReference type="UniPathway" id="UPA00358">
    <property type="reaction ID" value="UER00476"/>
</dbReference>
<dbReference type="Proteomes" id="UP000008841">
    <property type="component" value="Chromosome"/>
</dbReference>
<dbReference type="GO" id="GO:0005829">
    <property type="term" value="C:cytosol"/>
    <property type="evidence" value="ECO:0007669"/>
    <property type="project" value="TreeGrafter"/>
</dbReference>
<dbReference type="GO" id="GO:0008690">
    <property type="term" value="F:3-deoxy-manno-octulosonate cytidylyltransferase activity"/>
    <property type="evidence" value="ECO:0007669"/>
    <property type="project" value="UniProtKB-UniRule"/>
</dbReference>
<dbReference type="GO" id="GO:0033468">
    <property type="term" value="P:CMP-keto-3-deoxy-D-manno-octulosonic acid biosynthetic process"/>
    <property type="evidence" value="ECO:0007669"/>
    <property type="project" value="UniProtKB-UniRule"/>
</dbReference>
<dbReference type="GO" id="GO:0009103">
    <property type="term" value="P:lipopolysaccharide biosynthetic process"/>
    <property type="evidence" value="ECO:0007669"/>
    <property type="project" value="UniProtKB-UniRule"/>
</dbReference>
<dbReference type="CDD" id="cd02517">
    <property type="entry name" value="CMP-KDO-Synthetase"/>
    <property type="match status" value="1"/>
</dbReference>
<dbReference type="Gene3D" id="3.90.550.10">
    <property type="entry name" value="Spore Coat Polysaccharide Biosynthesis Protein SpsA, Chain A"/>
    <property type="match status" value="1"/>
</dbReference>
<dbReference type="HAMAP" id="MF_00057">
    <property type="entry name" value="KdsB"/>
    <property type="match status" value="1"/>
</dbReference>
<dbReference type="InterPro" id="IPR003329">
    <property type="entry name" value="Cytidylyl_trans"/>
</dbReference>
<dbReference type="InterPro" id="IPR004528">
    <property type="entry name" value="KdsB"/>
</dbReference>
<dbReference type="InterPro" id="IPR029044">
    <property type="entry name" value="Nucleotide-diphossugar_trans"/>
</dbReference>
<dbReference type="NCBIfam" id="TIGR00466">
    <property type="entry name" value="kdsB"/>
    <property type="match status" value="1"/>
</dbReference>
<dbReference type="NCBIfam" id="NF003950">
    <property type="entry name" value="PRK05450.1-3"/>
    <property type="match status" value="1"/>
</dbReference>
<dbReference type="NCBIfam" id="NF003952">
    <property type="entry name" value="PRK05450.1-5"/>
    <property type="match status" value="1"/>
</dbReference>
<dbReference type="NCBIfam" id="NF009905">
    <property type="entry name" value="PRK13368.1"/>
    <property type="match status" value="1"/>
</dbReference>
<dbReference type="PANTHER" id="PTHR42866">
    <property type="entry name" value="3-DEOXY-MANNO-OCTULOSONATE CYTIDYLYLTRANSFERASE"/>
    <property type="match status" value="1"/>
</dbReference>
<dbReference type="PANTHER" id="PTHR42866:SF2">
    <property type="entry name" value="3-DEOXY-MANNO-OCTULOSONATE CYTIDYLYLTRANSFERASE, MITOCHONDRIAL"/>
    <property type="match status" value="1"/>
</dbReference>
<dbReference type="Pfam" id="PF02348">
    <property type="entry name" value="CTP_transf_3"/>
    <property type="match status" value="1"/>
</dbReference>
<dbReference type="SUPFAM" id="SSF53448">
    <property type="entry name" value="Nucleotide-diphospho-sugar transferases"/>
    <property type="match status" value="1"/>
</dbReference>
<sequence length="247" mass="27523">MNAVILIPARLDSSRLPKKMLADLDGEPLIVRTWRQALLSNHAVRVVVATDSPEIAGALEAYGAEVMMTSPHARCGTERIAEAARSIDADVFLNLQGDEPLIDPRNIDLCLEPFLADNPPDCSTLVYPLLPEDFQQIDDPNVVKVVLDRNGNALYFSRSPVPFQREVYAATQFYRHIGLYAFSAEVLQHYASLPPSMLEKAESLEQLRLLENGFSIRCVTTTVDHPGVNTPEDLDLVRRMLRRSAGR</sequence>
<protein>
    <recommendedName>
        <fullName evidence="1">3-deoxy-manno-octulosonate cytidylyltransferase</fullName>
        <ecNumber evidence="1">2.7.7.38</ecNumber>
    </recommendedName>
    <alternativeName>
        <fullName evidence="1">CMP-2-keto-3-deoxyoctulosonic acid synthase</fullName>
        <shortName evidence="1">CKS</shortName>
        <shortName evidence="1">CMP-KDO synthase</shortName>
    </alternativeName>
</protein>
<keyword id="KW-0963">Cytoplasm</keyword>
<keyword id="KW-0448">Lipopolysaccharide biosynthesis</keyword>
<keyword id="KW-0548">Nucleotidyltransferase</keyword>
<keyword id="KW-0808">Transferase</keyword>
<evidence type="ECO:0000255" key="1">
    <source>
        <dbReference type="HAMAP-Rule" id="MF_00057"/>
    </source>
</evidence>
<accession>B3EG58</accession>
<organism>
    <name type="scientific">Chlorobium limicola (strain DSM 245 / NBRC 103803 / 6330)</name>
    <dbReference type="NCBI Taxonomy" id="290315"/>
    <lineage>
        <taxon>Bacteria</taxon>
        <taxon>Pseudomonadati</taxon>
        <taxon>Chlorobiota</taxon>
        <taxon>Chlorobiia</taxon>
        <taxon>Chlorobiales</taxon>
        <taxon>Chlorobiaceae</taxon>
        <taxon>Chlorobium/Pelodictyon group</taxon>
        <taxon>Chlorobium</taxon>
    </lineage>
</organism>
<proteinExistence type="inferred from homology"/>
<gene>
    <name evidence="1" type="primary">kdsB</name>
    <name type="ordered locus">Clim_2038</name>
</gene>
<comment type="function">
    <text evidence="1">Activates KDO (a required 8-carbon sugar) for incorporation into bacterial lipopolysaccharide in Gram-negative bacteria.</text>
</comment>
<comment type="catalytic activity">
    <reaction evidence="1">
        <text>3-deoxy-alpha-D-manno-oct-2-ulosonate + CTP = CMP-3-deoxy-beta-D-manno-octulosonate + diphosphate</text>
        <dbReference type="Rhea" id="RHEA:23448"/>
        <dbReference type="ChEBI" id="CHEBI:33019"/>
        <dbReference type="ChEBI" id="CHEBI:37563"/>
        <dbReference type="ChEBI" id="CHEBI:85986"/>
        <dbReference type="ChEBI" id="CHEBI:85987"/>
        <dbReference type="EC" id="2.7.7.38"/>
    </reaction>
</comment>
<comment type="pathway">
    <text evidence="1">Nucleotide-sugar biosynthesis; CMP-3-deoxy-D-manno-octulosonate biosynthesis; CMP-3-deoxy-D-manno-octulosonate from 3-deoxy-D-manno-octulosonate and CTP: step 1/1.</text>
</comment>
<comment type="pathway">
    <text evidence="1">Bacterial outer membrane biogenesis; lipopolysaccharide biosynthesis.</text>
</comment>
<comment type="subcellular location">
    <subcellularLocation>
        <location evidence="1">Cytoplasm</location>
    </subcellularLocation>
</comment>
<comment type="similarity">
    <text evidence="1">Belongs to the KdsB family.</text>
</comment>
<feature type="chain" id="PRO_1000116885" description="3-deoxy-manno-octulosonate cytidylyltransferase">
    <location>
        <begin position="1"/>
        <end position="247"/>
    </location>
</feature>
<reference key="1">
    <citation type="submission" date="2008-05" db="EMBL/GenBank/DDBJ databases">
        <title>Complete sequence of Chlorobium limicola DSM 245.</title>
        <authorList>
            <consortium name="US DOE Joint Genome Institute"/>
            <person name="Lucas S."/>
            <person name="Copeland A."/>
            <person name="Lapidus A."/>
            <person name="Glavina del Rio T."/>
            <person name="Dalin E."/>
            <person name="Tice H."/>
            <person name="Bruce D."/>
            <person name="Goodwin L."/>
            <person name="Pitluck S."/>
            <person name="Schmutz J."/>
            <person name="Larimer F."/>
            <person name="Land M."/>
            <person name="Hauser L."/>
            <person name="Kyrpides N."/>
            <person name="Ovchinnikova G."/>
            <person name="Zhao F."/>
            <person name="Li T."/>
            <person name="Liu Z."/>
            <person name="Overmann J."/>
            <person name="Bryant D.A."/>
            <person name="Richardson P."/>
        </authorList>
    </citation>
    <scope>NUCLEOTIDE SEQUENCE [LARGE SCALE GENOMIC DNA]</scope>
    <source>
        <strain>DSM 245 / NBRC 103803 / 6330</strain>
    </source>
</reference>